<gene>
    <name evidence="1" type="primary">trpA</name>
    <name type="ordered locus">NFA_18620</name>
</gene>
<dbReference type="EC" id="4.2.1.20" evidence="1"/>
<dbReference type="EMBL" id="AP006618">
    <property type="protein sequence ID" value="BAD56708.1"/>
    <property type="molecule type" value="Genomic_DNA"/>
</dbReference>
<dbReference type="RefSeq" id="WP_011208393.1">
    <property type="nucleotide sequence ID" value="NC_006361.1"/>
</dbReference>
<dbReference type="SMR" id="Q5YYN3"/>
<dbReference type="STRING" id="247156.NFA_18620"/>
<dbReference type="GeneID" id="61132646"/>
<dbReference type="KEGG" id="nfa:NFA_18620"/>
<dbReference type="eggNOG" id="COG0159">
    <property type="taxonomic scope" value="Bacteria"/>
</dbReference>
<dbReference type="HOGENOM" id="CLU_016734_0_0_11"/>
<dbReference type="OrthoDB" id="9804578at2"/>
<dbReference type="UniPathway" id="UPA00035">
    <property type="reaction ID" value="UER00044"/>
</dbReference>
<dbReference type="Proteomes" id="UP000006820">
    <property type="component" value="Chromosome"/>
</dbReference>
<dbReference type="GO" id="GO:0005829">
    <property type="term" value="C:cytosol"/>
    <property type="evidence" value="ECO:0007669"/>
    <property type="project" value="TreeGrafter"/>
</dbReference>
<dbReference type="GO" id="GO:0004834">
    <property type="term" value="F:tryptophan synthase activity"/>
    <property type="evidence" value="ECO:0007669"/>
    <property type="project" value="UniProtKB-UniRule"/>
</dbReference>
<dbReference type="CDD" id="cd04724">
    <property type="entry name" value="Tryptophan_synthase_alpha"/>
    <property type="match status" value="1"/>
</dbReference>
<dbReference type="FunFam" id="3.20.20.70:FF:000037">
    <property type="entry name" value="Tryptophan synthase alpha chain"/>
    <property type="match status" value="1"/>
</dbReference>
<dbReference type="Gene3D" id="3.20.20.70">
    <property type="entry name" value="Aldolase class I"/>
    <property type="match status" value="1"/>
</dbReference>
<dbReference type="HAMAP" id="MF_00131">
    <property type="entry name" value="Trp_synth_alpha"/>
    <property type="match status" value="1"/>
</dbReference>
<dbReference type="InterPro" id="IPR013785">
    <property type="entry name" value="Aldolase_TIM"/>
</dbReference>
<dbReference type="InterPro" id="IPR011060">
    <property type="entry name" value="RibuloseP-bd_barrel"/>
</dbReference>
<dbReference type="InterPro" id="IPR018204">
    <property type="entry name" value="Trp_synthase_alpha_AS"/>
</dbReference>
<dbReference type="InterPro" id="IPR002028">
    <property type="entry name" value="Trp_synthase_suA"/>
</dbReference>
<dbReference type="NCBIfam" id="TIGR00262">
    <property type="entry name" value="trpA"/>
    <property type="match status" value="1"/>
</dbReference>
<dbReference type="PANTHER" id="PTHR43406:SF1">
    <property type="entry name" value="TRYPTOPHAN SYNTHASE ALPHA CHAIN, CHLOROPLASTIC"/>
    <property type="match status" value="1"/>
</dbReference>
<dbReference type="PANTHER" id="PTHR43406">
    <property type="entry name" value="TRYPTOPHAN SYNTHASE, ALPHA CHAIN"/>
    <property type="match status" value="1"/>
</dbReference>
<dbReference type="Pfam" id="PF00290">
    <property type="entry name" value="Trp_syntA"/>
    <property type="match status" value="1"/>
</dbReference>
<dbReference type="SUPFAM" id="SSF51366">
    <property type="entry name" value="Ribulose-phoshate binding barrel"/>
    <property type="match status" value="1"/>
</dbReference>
<dbReference type="PROSITE" id="PS00167">
    <property type="entry name" value="TRP_SYNTHASE_ALPHA"/>
    <property type="match status" value="1"/>
</dbReference>
<name>TRPA_NOCFA</name>
<evidence type="ECO:0000255" key="1">
    <source>
        <dbReference type="HAMAP-Rule" id="MF_00131"/>
    </source>
</evidence>
<accession>Q5YYN3</accession>
<keyword id="KW-0028">Amino-acid biosynthesis</keyword>
<keyword id="KW-0057">Aromatic amino acid biosynthesis</keyword>
<keyword id="KW-0456">Lyase</keyword>
<keyword id="KW-1185">Reference proteome</keyword>
<keyword id="KW-0822">Tryptophan biosynthesis</keyword>
<protein>
    <recommendedName>
        <fullName evidence="1">Tryptophan synthase alpha chain</fullName>
        <ecNumber evidence="1">4.2.1.20</ecNumber>
    </recommendedName>
</protein>
<proteinExistence type="inferred from homology"/>
<feature type="chain" id="PRO_0000098817" description="Tryptophan synthase alpha chain">
    <location>
        <begin position="1"/>
        <end position="266"/>
    </location>
</feature>
<feature type="active site" description="Proton acceptor" evidence="1">
    <location>
        <position position="52"/>
    </location>
</feature>
<feature type="active site" description="Proton acceptor" evidence="1">
    <location>
        <position position="63"/>
    </location>
</feature>
<reference key="1">
    <citation type="journal article" date="2004" name="Proc. Natl. Acad. Sci. U.S.A.">
        <title>The complete genomic sequence of Nocardia farcinica IFM 10152.</title>
        <authorList>
            <person name="Ishikawa J."/>
            <person name="Yamashita A."/>
            <person name="Mikami Y."/>
            <person name="Hoshino Y."/>
            <person name="Kurita H."/>
            <person name="Hotta K."/>
            <person name="Shiba T."/>
            <person name="Hattori M."/>
        </authorList>
    </citation>
    <scope>NUCLEOTIDE SEQUENCE [LARGE SCALE GENOMIC DNA]</scope>
    <source>
        <strain>IFM 10152</strain>
    </source>
</reference>
<organism>
    <name type="scientific">Nocardia farcinica (strain IFM 10152)</name>
    <dbReference type="NCBI Taxonomy" id="247156"/>
    <lineage>
        <taxon>Bacteria</taxon>
        <taxon>Bacillati</taxon>
        <taxon>Actinomycetota</taxon>
        <taxon>Actinomycetes</taxon>
        <taxon>Mycobacteriales</taxon>
        <taxon>Nocardiaceae</taxon>
        <taxon>Nocardia</taxon>
    </lineage>
</organism>
<comment type="function">
    <text evidence="1">The alpha subunit is responsible for the aldol cleavage of indoleglycerol phosphate to indole and glyceraldehyde 3-phosphate.</text>
</comment>
<comment type="catalytic activity">
    <reaction evidence="1">
        <text>(1S,2R)-1-C-(indol-3-yl)glycerol 3-phosphate + L-serine = D-glyceraldehyde 3-phosphate + L-tryptophan + H2O</text>
        <dbReference type="Rhea" id="RHEA:10532"/>
        <dbReference type="ChEBI" id="CHEBI:15377"/>
        <dbReference type="ChEBI" id="CHEBI:33384"/>
        <dbReference type="ChEBI" id="CHEBI:57912"/>
        <dbReference type="ChEBI" id="CHEBI:58866"/>
        <dbReference type="ChEBI" id="CHEBI:59776"/>
        <dbReference type="EC" id="4.2.1.20"/>
    </reaction>
</comment>
<comment type="pathway">
    <text evidence="1">Amino-acid biosynthesis; L-tryptophan biosynthesis; L-tryptophan from chorismate: step 5/5.</text>
</comment>
<comment type="subunit">
    <text evidence="1">Tetramer of two alpha and two beta chains.</text>
</comment>
<comment type="similarity">
    <text evidence="1">Belongs to the TrpA family.</text>
</comment>
<sequence length="266" mass="27308">MSQQSRLANTFATARAEHRAALIGYLPAGYPDLAGSIATCRAMVESGCDIVEVGVAYSDPVMDGPTIQAAAEQALRGGVRVRDVFSVVEAITAAGGQAVVMSYWNPVLRYGVERFARDLAAAGGAGIITPNLIPEEADDWFIASATHNLDRIFLVAPSSTEERLVKTLEASRGFIYAASTMGVTGARDAVSSAAPALCARIRAHSDIPIGVGLGVRNGAQAAEIASYADGVIVGSALVSAAGEGLDAVRALTSELAEGVRSATVAS</sequence>